<proteinExistence type="inferred from homology"/>
<name>LPXA_PECAS</name>
<organism>
    <name type="scientific">Pectobacterium atrosepticum (strain SCRI 1043 / ATCC BAA-672)</name>
    <name type="common">Erwinia carotovora subsp. atroseptica</name>
    <dbReference type="NCBI Taxonomy" id="218491"/>
    <lineage>
        <taxon>Bacteria</taxon>
        <taxon>Pseudomonadati</taxon>
        <taxon>Pseudomonadota</taxon>
        <taxon>Gammaproteobacteria</taxon>
        <taxon>Enterobacterales</taxon>
        <taxon>Pectobacteriaceae</taxon>
        <taxon>Pectobacterium</taxon>
    </lineage>
</organism>
<evidence type="ECO:0000255" key="1">
    <source>
        <dbReference type="HAMAP-Rule" id="MF_00387"/>
    </source>
</evidence>
<sequence length="262" mass="28040">MIDQTAFIHPSSIVEDGAIIGAGVHIGPFCYIGSQVEIGAGTVLKSHVVVNGVTKIGRDNEIYQFTSIGEVNQDLKYAGEPTRVEIGDRNRIRESVTIHRGTSQGGGLTKVGSDNLLMINTHIAHDCVVGNRCILANNATLGGHVSVDDFAIIGGMTAVHQFCIIGAHVMVGGCSGVAQDVPPYVVAQGNHATPFGLNIEGLKRRGFEKETLHAIRNAYKLLYRSGKTLDEVKPEIEALAAEHPAVQAFTDFFARSTRGIIR</sequence>
<protein>
    <recommendedName>
        <fullName evidence="1">Acyl-[acyl-carrier-protein]--UDP-N-acetylglucosamine O-acyltransferase</fullName>
        <shortName evidence="1">UDP-N-acetylglucosamine acyltransferase</shortName>
        <ecNumber evidence="1">2.3.1.129</ecNumber>
    </recommendedName>
</protein>
<dbReference type="EC" id="2.3.1.129" evidence="1"/>
<dbReference type="EMBL" id="BX950851">
    <property type="protein sequence ID" value="CAG73954.1"/>
    <property type="molecule type" value="Genomic_DNA"/>
</dbReference>
<dbReference type="RefSeq" id="WP_011092641.1">
    <property type="nucleotide sequence ID" value="NC_004547.2"/>
</dbReference>
<dbReference type="SMR" id="Q6D8D1"/>
<dbReference type="STRING" id="218491.ECA1043"/>
<dbReference type="GeneID" id="57207872"/>
<dbReference type="KEGG" id="eca:ECA1043"/>
<dbReference type="PATRIC" id="fig|218491.5.peg.1051"/>
<dbReference type="eggNOG" id="COG1043">
    <property type="taxonomic scope" value="Bacteria"/>
</dbReference>
<dbReference type="HOGENOM" id="CLU_061249_0_0_6"/>
<dbReference type="OrthoDB" id="9807278at2"/>
<dbReference type="UniPathway" id="UPA00359">
    <property type="reaction ID" value="UER00477"/>
</dbReference>
<dbReference type="Proteomes" id="UP000007966">
    <property type="component" value="Chromosome"/>
</dbReference>
<dbReference type="GO" id="GO:0005737">
    <property type="term" value="C:cytoplasm"/>
    <property type="evidence" value="ECO:0007669"/>
    <property type="project" value="UniProtKB-SubCell"/>
</dbReference>
<dbReference type="GO" id="GO:0016020">
    <property type="term" value="C:membrane"/>
    <property type="evidence" value="ECO:0007669"/>
    <property type="project" value="GOC"/>
</dbReference>
<dbReference type="GO" id="GO:0008780">
    <property type="term" value="F:acyl-[acyl-carrier-protein]-UDP-N-acetylglucosamine O-acyltransferase activity"/>
    <property type="evidence" value="ECO:0007669"/>
    <property type="project" value="UniProtKB-UniRule"/>
</dbReference>
<dbReference type="GO" id="GO:0009245">
    <property type="term" value="P:lipid A biosynthetic process"/>
    <property type="evidence" value="ECO:0007669"/>
    <property type="project" value="UniProtKB-UniRule"/>
</dbReference>
<dbReference type="CDD" id="cd03351">
    <property type="entry name" value="LbH_UDP-GlcNAc_AT"/>
    <property type="match status" value="1"/>
</dbReference>
<dbReference type="FunFam" id="2.160.10.10:FF:000003">
    <property type="entry name" value="Acyl-[acyl-carrier-protein]--UDP-N-acetylglucosamine O-acyltransferase"/>
    <property type="match status" value="1"/>
</dbReference>
<dbReference type="Gene3D" id="2.160.10.10">
    <property type="entry name" value="Hexapeptide repeat proteins"/>
    <property type="match status" value="1"/>
</dbReference>
<dbReference type="Gene3D" id="1.20.1180.10">
    <property type="entry name" value="Udp N-acetylglucosamine O-acyltransferase, C-terminal domain"/>
    <property type="match status" value="1"/>
</dbReference>
<dbReference type="HAMAP" id="MF_00387">
    <property type="entry name" value="LpxA"/>
    <property type="match status" value="1"/>
</dbReference>
<dbReference type="InterPro" id="IPR029098">
    <property type="entry name" value="Acetyltransf_C"/>
</dbReference>
<dbReference type="InterPro" id="IPR037157">
    <property type="entry name" value="Acetyltransf_C_sf"/>
</dbReference>
<dbReference type="InterPro" id="IPR001451">
    <property type="entry name" value="Hexapep"/>
</dbReference>
<dbReference type="InterPro" id="IPR018357">
    <property type="entry name" value="Hexapep_transf_CS"/>
</dbReference>
<dbReference type="InterPro" id="IPR010137">
    <property type="entry name" value="Lipid_A_LpxA"/>
</dbReference>
<dbReference type="InterPro" id="IPR011004">
    <property type="entry name" value="Trimer_LpxA-like_sf"/>
</dbReference>
<dbReference type="NCBIfam" id="TIGR01852">
    <property type="entry name" value="lipid_A_lpxA"/>
    <property type="match status" value="1"/>
</dbReference>
<dbReference type="NCBIfam" id="NF003657">
    <property type="entry name" value="PRK05289.1"/>
    <property type="match status" value="1"/>
</dbReference>
<dbReference type="PANTHER" id="PTHR43480">
    <property type="entry name" value="ACYL-[ACYL-CARRIER-PROTEIN]--UDP-N-ACETYLGLUCOSAMINE O-ACYLTRANSFERASE"/>
    <property type="match status" value="1"/>
</dbReference>
<dbReference type="PANTHER" id="PTHR43480:SF1">
    <property type="entry name" value="ACYL-[ACYL-CARRIER-PROTEIN]--UDP-N-ACETYLGLUCOSAMINE O-ACYLTRANSFERASE, MITOCHONDRIAL-RELATED"/>
    <property type="match status" value="1"/>
</dbReference>
<dbReference type="Pfam" id="PF13720">
    <property type="entry name" value="Acetyltransf_11"/>
    <property type="match status" value="1"/>
</dbReference>
<dbReference type="Pfam" id="PF00132">
    <property type="entry name" value="Hexapep"/>
    <property type="match status" value="2"/>
</dbReference>
<dbReference type="PIRSF" id="PIRSF000456">
    <property type="entry name" value="UDP-GlcNAc_acltr"/>
    <property type="match status" value="1"/>
</dbReference>
<dbReference type="SUPFAM" id="SSF51161">
    <property type="entry name" value="Trimeric LpxA-like enzymes"/>
    <property type="match status" value="1"/>
</dbReference>
<dbReference type="PROSITE" id="PS00101">
    <property type="entry name" value="HEXAPEP_TRANSFERASES"/>
    <property type="match status" value="2"/>
</dbReference>
<comment type="function">
    <text evidence="1">Involved in the biosynthesis of lipid A, a phosphorylated glycolipid that anchors the lipopolysaccharide to the outer membrane of the cell.</text>
</comment>
<comment type="catalytic activity">
    <reaction evidence="1">
        <text>a (3R)-hydroxyacyl-[ACP] + UDP-N-acetyl-alpha-D-glucosamine = a UDP-3-O-[(3R)-3-hydroxyacyl]-N-acetyl-alpha-D-glucosamine + holo-[ACP]</text>
        <dbReference type="Rhea" id="RHEA:67812"/>
        <dbReference type="Rhea" id="RHEA-COMP:9685"/>
        <dbReference type="Rhea" id="RHEA-COMP:9945"/>
        <dbReference type="ChEBI" id="CHEBI:57705"/>
        <dbReference type="ChEBI" id="CHEBI:64479"/>
        <dbReference type="ChEBI" id="CHEBI:78827"/>
        <dbReference type="ChEBI" id="CHEBI:173225"/>
        <dbReference type="EC" id="2.3.1.129"/>
    </reaction>
</comment>
<comment type="pathway">
    <text evidence="1">Glycolipid biosynthesis; lipid IV(A) biosynthesis; lipid IV(A) from (3R)-3-hydroxytetradecanoyl-[acyl-carrier-protein] and UDP-N-acetyl-alpha-D-glucosamine: step 1/6.</text>
</comment>
<comment type="subunit">
    <text evidence="1">Homotrimer.</text>
</comment>
<comment type="subcellular location">
    <subcellularLocation>
        <location evidence="1">Cytoplasm</location>
    </subcellularLocation>
</comment>
<comment type="similarity">
    <text evidence="1">Belongs to the transferase hexapeptide repeat family. LpxA subfamily.</text>
</comment>
<accession>Q6D8D1</accession>
<gene>
    <name evidence="1" type="primary">lpxA</name>
    <name type="ordered locus">ECA1043</name>
</gene>
<reference key="1">
    <citation type="journal article" date="2004" name="Proc. Natl. Acad. Sci. U.S.A.">
        <title>Genome sequence of the enterobacterial phytopathogen Erwinia carotovora subsp. atroseptica and characterization of virulence factors.</title>
        <authorList>
            <person name="Bell K.S."/>
            <person name="Sebaihia M."/>
            <person name="Pritchard L."/>
            <person name="Holden M.T.G."/>
            <person name="Hyman L.J."/>
            <person name="Holeva M.C."/>
            <person name="Thomson N.R."/>
            <person name="Bentley S.D."/>
            <person name="Churcher L.J.C."/>
            <person name="Mungall K."/>
            <person name="Atkin R."/>
            <person name="Bason N."/>
            <person name="Brooks K."/>
            <person name="Chillingworth T."/>
            <person name="Clark K."/>
            <person name="Doggett J."/>
            <person name="Fraser A."/>
            <person name="Hance Z."/>
            <person name="Hauser H."/>
            <person name="Jagels K."/>
            <person name="Moule S."/>
            <person name="Norbertczak H."/>
            <person name="Ormond D."/>
            <person name="Price C."/>
            <person name="Quail M.A."/>
            <person name="Sanders M."/>
            <person name="Walker D."/>
            <person name="Whitehead S."/>
            <person name="Salmond G.P.C."/>
            <person name="Birch P.R.J."/>
            <person name="Parkhill J."/>
            <person name="Toth I.K."/>
        </authorList>
    </citation>
    <scope>NUCLEOTIDE SEQUENCE [LARGE SCALE GENOMIC DNA]</scope>
    <source>
        <strain>SCRI 1043 / ATCC BAA-672</strain>
    </source>
</reference>
<feature type="chain" id="PRO_0000302571" description="Acyl-[acyl-carrier-protein]--UDP-N-acetylglucosamine O-acyltransferase">
    <location>
        <begin position="1"/>
        <end position="262"/>
    </location>
</feature>
<keyword id="KW-0012">Acyltransferase</keyword>
<keyword id="KW-0963">Cytoplasm</keyword>
<keyword id="KW-0441">Lipid A biosynthesis</keyword>
<keyword id="KW-0444">Lipid biosynthesis</keyword>
<keyword id="KW-0443">Lipid metabolism</keyword>
<keyword id="KW-1185">Reference proteome</keyword>
<keyword id="KW-0677">Repeat</keyword>
<keyword id="KW-0808">Transferase</keyword>